<sequence length="210" mass="23820">PEYTIIYFNARGRCEAMRMLMADQGAQWKEEVVTSDDWQKGDLKKAAVYGQLPGFKDGDFTLYQSNAMLRLLARNHDLYGKNPREASLIDMVNDGVEDLRLKYLKMIYQNYENGKDDYVKALPTNLGHFERLLASNNEGKGFVVGAHISFADYNLVDLLHNHLVLAPDCLSGFPLLCAYVKRISSRPKLEAYLSSDAHKKRPINGNGKQQ</sequence>
<proteinExistence type="evidence at protein level"/>
<feature type="chain" id="PRO_0000185908" description="Glutathione S-transferase P 1">
    <location>
        <begin position="1"/>
        <end position="210"/>
    </location>
</feature>
<feature type="domain" description="GST N-terminal">
    <location>
        <begin position="1"/>
        <end position="80"/>
    </location>
</feature>
<feature type="domain" description="GST C-terminal">
    <location>
        <begin position="82"/>
        <end position="203"/>
    </location>
</feature>
<feature type="binding site" evidence="2">
    <location>
        <position position="7"/>
    </location>
    <ligand>
        <name>glutathione</name>
        <dbReference type="ChEBI" id="CHEBI:57925"/>
    </ligand>
</feature>
<feature type="binding site" evidence="2">
    <location>
        <position position="13"/>
    </location>
    <ligand>
        <name>glutathione</name>
        <dbReference type="ChEBI" id="CHEBI:57925"/>
    </ligand>
</feature>
<feature type="binding site" evidence="2">
    <location>
        <position position="38"/>
    </location>
    <ligand>
        <name>glutathione</name>
        <dbReference type="ChEBI" id="CHEBI:57925"/>
    </ligand>
</feature>
<feature type="binding site" evidence="2">
    <location>
        <position position="44"/>
    </location>
    <ligand>
        <name>glutathione</name>
        <dbReference type="ChEBI" id="CHEBI:57925"/>
    </ligand>
</feature>
<feature type="binding site" evidence="2">
    <location>
        <begin position="51"/>
        <end position="52"/>
    </location>
    <ligand>
        <name>glutathione</name>
        <dbReference type="ChEBI" id="CHEBI:57925"/>
    </ligand>
</feature>
<feature type="binding site" evidence="2">
    <location>
        <begin position="64"/>
        <end position="65"/>
    </location>
    <ligand>
        <name>glutathione</name>
        <dbReference type="ChEBI" id="CHEBI:57925"/>
    </ligand>
</feature>
<accession>P81942</accession>
<dbReference type="EC" id="2.5.1.18"/>
<dbReference type="SMR" id="P81942"/>
<dbReference type="GO" id="GO:0005829">
    <property type="term" value="C:cytosol"/>
    <property type="evidence" value="ECO:0007669"/>
    <property type="project" value="TreeGrafter"/>
</dbReference>
<dbReference type="GO" id="GO:0005739">
    <property type="term" value="C:mitochondrion"/>
    <property type="evidence" value="ECO:0007669"/>
    <property type="project" value="UniProtKB-SubCell"/>
</dbReference>
<dbReference type="GO" id="GO:0005634">
    <property type="term" value="C:nucleus"/>
    <property type="evidence" value="ECO:0007669"/>
    <property type="project" value="UniProtKB-SubCell"/>
</dbReference>
<dbReference type="GO" id="GO:0004364">
    <property type="term" value="F:glutathione transferase activity"/>
    <property type="evidence" value="ECO:0007669"/>
    <property type="project" value="UniProtKB-EC"/>
</dbReference>
<dbReference type="GO" id="GO:0006749">
    <property type="term" value="P:glutathione metabolic process"/>
    <property type="evidence" value="ECO:0007669"/>
    <property type="project" value="TreeGrafter"/>
</dbReference>
<dbReference type="CDD" id="cd03210">
    <property type="entry name" value="GST_C_Pi"/>
    <property type="match status" value="1"/>
</dbReference>
<dbReference type="CDD" id="cd03076">
    <property type="entry name" value="GST_N_Pi"/>
    <property type="match status" value="1"/>
</dbReference>
<dbReference type="FunFam" id="1.20.1050.10:FF:000047">
    <property type="entry name" value="Glutathione S-transferase P"/>
    <property type="match status" value="1"/>
</dbReference>
<dbReference type="Gene3D" id="1.20.1050.10">
    <property type="match status" value="1"/>
</dbReference>
<dbReference type="Gene3D" id="3.40.30.10">
    <property type="entry name" value="Glutaredoxin"/>
    <property type="match status" value="1"/>
</dbReference>
<dbReference type="InterPro" id="IPR010987">
    <property type="entry name" value="Glutathione-S-Trfase_C-like"/>
</dbReference>
<dbReference type="InterPro" id="IPR036282">
    <property type="entry name" value="Glutathione-S-Trfase_C_sf"/>
</dbReference>
<dbReference type="InterPro" id="IPR004045">
    <property type="entry name" value="Glutathione_S-Trfase_N"/>
</dbReference>
<dbReference type="InterPro" id="IPR004046">
    <property type="entry name" value="GST_C"/>
</dbReference>
<dbReference type="InterPro" id="IPR003082">
    <property type="entry name" value="GST_pi"/>
</dbReference>
<dbReference type="InterPro" id="IPR050213">
    <property type="entry name" value="GST_superfamily"/>
</dbReference>
<dbReference type="InterPro" id="IPR036249">
    <property type="entry name" value="Thioredoxin-like_sf"/>
</dbReference>
<dbReference type="PANTHER" id="PTHR11571">
    <property type="entry name" value="GLUTATHIONE S-TRANSFERASE"/>
    <property type="match status" value="1"/>
</dbReference>
<dbReference type="PANTHER" id="PTHR11571:SF141">
    <property type="entry name" value="GLUTATHIONE S-TRANSFERASE"/>
    <property type="match status" value="1"/>
</dbReference>
<dbReference type="Pfam" id="PF14497">
    <property type="entry name" value="GST_C_3"/>
    <property type="match status" value="1"/>
</dbReference>
<dbReference type="Pfam" id="PF02798">
    <property type="entry name" value="GST_N"/>
    <property type="match status" value="1"/>
</dbReference>
<dbReference type="PRINTS" id="PR01268">
    <property type="entry name" value="GSTRNSFRASEP"/>
</dbReference>
<dbReference type="SFLD" id="SFLDG01205">
    <property type="entry name" value="AMPS.1"/>
    <property type="match status" value="1"/>
</dbReference>
<dbReference type="SFLD" id="SFLDG00363">
    <property type="entry name" value="AMPS_(cytGST):_Alpha-__Mu-__Pi"/>
    <property type="match status" value="1"/>
</dbReference>
<dbReference type="SUPFAM" id="SSF47616">
    <property type="entry name" value="GST C-terminal domain-like"/>
    <property type="match status" value="1"/>
</dbReference>
<dbReference type="SUPFAM" id="SSF52833">
    <property type="entry name" value="Thioredoxin-like"/>
    <property type="match status" value="1"/>
</dbReference>
<dbReference type="PROSITE" id="PS50405">
    <property type="entry name" value="GST_CTER"/>
    <property type="match status" value="1"/>
</dbReference>
<dbReference type="PROSITE" id="PS50404">
    <property type="entry name" value="GST_NTER"/>
    <property type="match status" value="1"/>
</dbReference>
<name>GSTP1_BUFBU</name>
<reference key="1">
    <citation type="journal article" date="1997" name="Biochem. J.">
        <title>Amphibian embryo glutathione transferase: amino acid sequence and structural properties.</title>
        <authorList>
            <person name="Sacchetta P."/>
            <person name="Petruzzelli R."/>
            <person name="Melino S."/>
            <person name="Bucciarelli T."/>
            <person name="Pennelli A."/>
            <person name="Amicarelli F."/>
            <person name="Miranda M."/>
            <person name="Di Ilio C."/>
        </authorList>
    </citation>
    <scope>PROTEIN SEQUENCE</scope>
    <source>
        <tissue>Embryo</tissue>
    </source>
</reference>
<protein>
    <recommendedName>
        <fullName>Glutathione S-transferase P 1</fullName>
        <ecNumber>2.5.1.18</ecNumber>
    </recommendedName>
    <alternativeName>
        <fullName>BBGSTP1-1</fullName>
    </alternativeName>
    <alternativeName>
        <fullName>GST class-pi</fullName>
    </alternativeName>
</protein>
<comment type="function">
    <text>Conjugation of reduced glutathione to a wide number of exogenous and endogenous hydrophobic electrophiles.</text>
</comment>
<comment type="catalytic activity">
    <reaction>
        <text>RX + glutathione = an S-substituted glutathione + a halide anion + H(+)</text>
        <dbReference type="Rhea" id="RHEA:16437"/>
        <dbReference type="ChEBI" id="CHEBI:15378"/>
        <dbReference type="ChEBI" id="CHEBI:16042"/>
        <dbReference type="ChEBI" id="CHEBI:17792"/>
        <dbReference type="ChEBI" id="CHEBI:57925"/>
        <dbReference type="ChEBI" id="CHEBI:90779"/>
        <dbReference type="EC" id="2.5.1.18"/>
    </reaction>
</comment>
<comment type="subunit">
    <text>Homodimer.</text>
</comment>
<comment type="subcellular location">
    <subcellularLocation>
        <location evidence="1">Cytoplasm</location>
    </subcellularLocation>
    <subcellularLocation>
        <location evidence="1">Mitochondrion</location>
    </subcellularLocation>
    <subcellularLocation>
        <location evidence="1">Nucleus</location>
    </subcellularLocation>
    <text evidence="1">The 83 N-terminal amino acids function as un uncleaved transit peptide, and arginine residues within it are crucial for mitochondrial localization.</text>
</comment>
<comment type="similarity">
    <text evidence="3">Belongs to the GST superfamily. Pi family.</text>
</comment>
<organism>
    <name type="scientific">Bufo bufo</name>
    <name type="common">European toad</name>
    <name type="synonym">Rana bufo</name>
    <dbReference type="NCBI Taxonomy" id="8384"/>
    <lineage>
        <taxon>Eukaryota</taxon>
        <taxon>Metazoa</taxon>
        <taxon>Chordata</taxon>
        <taxon>Craniata</taxon>
        <taxon>Vertebrata</taxon>
        <taxon>Euteleostomi</taxon>
        <taxon>Amphibia</taxon>
        <taxon>Batrachia</taxon>
        <taxon>Anura</taxon>
        <taxon>Neobatrachia</taxon>
        <taxon>Hyloidea</taxon>
        <taxon>Bufonidae</taxon>
        <taxon>Bufo</taxon>
    </lineage>
</organism>
<evidence type="ECO:0000250" key="1"/>
<evidence type="ECO:0000250" key="2">
    <source>
        <dbReference type="UniProtKB" id="P09211"/>
    </source>
</evidence>
<evidence type="ECO:0000305" key="3"/>
<keyword id="KW-0963">Cytoplasm</keyword>
<keyword id="KW-0903">Direct protein sequencing</keyword>
<keyword id="KW-0496">Mitochondrion</keyword>
<keyword id="KW-0539">Nucleus</keyword>
<keyword id="KW-0808">Transferase</keyword>